<organism>
    <name type="scientific">Locusta migratoria</name>
    <name type="common">Migratory locust</name>
    <dbReference type="NCBI Taxonomy" id="7004"/>
    <lineage>
        <taxon>Eukaryota</taxon>
        <taxon>Metazoa</taxon>
        <taxon>Ecdysozoa</taxon>
        <taxon>Arthropoda</taxon>
        <taxon>Hexapoda</taxon>
        <taxon>Insecta</taxon>
        <taxon>Pterygota</taxon>
        <taxon>Neoptera</taxon>
        <taxon>Polyneoptera</taxon>
        <taxon>Orthoptera</taxon>
        <taxon>Caelifera</taxon>
        <taxon>Acrididea</taxon>
        <taxon>Acridomorpha</taxon>
        <taxon>Acridoidea</taxon>
        <taxon>Acrididae</taxon>
        <taxon>Oedipodinae</taxon>
        <taxon>Locusta</taxon>
    </lineage>
</organism>
<keyword id="KW-0027">Amidation</keyword>
<keyword id="KW-0193">Cuticle</keyword>
<keyword id="KW-0903">Direct protein sequencing</keyword>
<keyword id="KW-0325">Glycoprotein</keyword>
<keyword id="KW-0873">Pyrrolidone carboxylic acid</keyword>
<name>CUD4_LOCMI</name>
<accession>P21799</accession>
<sequence>QAPSDKVIPIISQNEVRNPDGSYQWNYETGNGIKADETGTLKKGSKPDEGDFIVAQGSFSYTGPDGTAYQVQYSADDENGFVPQGAHFPTPPPIPPAIQRALDYLATLPPTPEARP</sequence>
<evidence type="ECO:0000255" key="1">
    <source>
        <dbReference type="PROSITE-ProRule" id="PRU00497"/>
    </source>
</evidence>
<evidence type="ECO:0000256" key="2">
    <source>
        <dbReference type="SAM" id="MobiDB-lite"/>
    </source>
</evidence>
<evidence type="ECO:0000269" key="3">
    <source>
    </source>
</evidence>
<feature type="chain" id="PRO_0000196116" description="Endocuticle structural glycoprotein ABD-4">
    <location>
        <begin position="1"/>
        <end position="116"/>
    </location>
</feature>
<feature type="domain" description="Chitin-binding type R&amp;R" evidence="1">
    <location>
        <begin position="20"/>
        <end position="92"/>
    </location>
</feature>
<feature type="region of interest" description="Disordered" evidence="2">
    <location>
        <begin position="78"/>
        <end position="97"/>
    </location>
</feature>
<feature type="modified residue" description="Pyrrolidone carboxylic acid" evidence="3">
    <location>
        <position position="1"/>
    </location>
</feature>
<feature type="modified residue" description="Proline amide" evidence="3">
    <location>
        <position position="116"/>
    </location>
</feature>
<feature type="glycosylation site" description="O-linked (GalNAc) threonine; in ADB-4A, ABD-4B and ABD-4C" evidence="3">
    <location>
        <position position="90"/>
    </location>
</feature>
<feature type="glycosylation site" description="O-linked (GalNAc) threonine; in ADB-4A and ABD-4B" evidence="3">
    <location>
        <position position="107"/>
    </location>
</feature>
<feature type="glycosylation site" description="O-linked (GalNAc) threonine; in ADB-4A" evidence="3">
    <location>
        <position position="111"/>
    </location>
</feature>
<protein>
    <recommendedName>
        <fullName>Endocuticle structural glycoprotein ABD-4</fullName>
    </recommendedName>
</protein>
<dbReference type="PIR" id="S14261">
    <property type="entry name" value="S14261"/>
</dbReference>
<dbReference type="iPTMnet" id="P21799"/>
<dbReference type="GO" id="GO:0062129">
    <property type="term" value="C:chitin-based extracellular matrix"/>
    <property type="evidence" value="ECO:0007669"/>
    <property type="project" value="TreeGrafter"/>
</dbReference>
<dbReference type="GO" id="GO:0008010">
    <property type="term" value="F:structural constituent of chitin-based larval cuticle"/>
    <property type="evidence" value="ECO:0007669"/>
    <property type="project" value="TreeGrafter"/>
</dbReference>
<dbReference type="InterPro" id="IPR031311">
    <property type="entry name" value="CHIT_BIND_RR_consensus"/>
</dbReference>
<dbReference type="InterPro" id="IPR050468">
    <property type="entry name" value="Cuticle_Struct_Prot"/>
</dbReference>
<dbReference type="InterPro" id="IPR000618">
    <property type="entry name" value="Insect_cuticle"/>
</dbReference>
<dbReference type="PANTHER" id="PTHR10380">
    <property type="entry name" value="CUTICLE PROTEIN"/>
    <property type="match status" value="1"/>
</dbReference>
<dbReference type="PANTHER" id="PTHR10380:SF241">
    <property type="entry name" value="CUTICULAR PROTEIN 47EG-RELATED"/>
    <property type="match status" value="1"/>
</dbReference>
<dbReference type="Pfam" id="PF00379">
    <property type="entry name" value="Chitin_bind_4"/>
    <property type="match status" value="1"/>
</dbReference>
<dbReference type="PRINTS" id="PR00947">
    <property type="entry name" value="CUTICLE"/>
</dbReference>
<dbReference type="PROSITE" id="PS00233">
    <property type="entry name" value="CHIT_BIND_RR_1"/>
    <property type="match status" value="1"/>
</dbReference>
<dbReference type="PROSITE" id="PS51155">
    <property type="entry name" value="CHIT_BIND_RR_2"/>
    <property type="match status" value="1"/>
</dbReference>
<reference key="1">
    <citation type="journal article" date="1991" name="Eur. J. Biochem.">
        <title>Determination of the covalent structure of an N- and C-terminally blocked glycoprotein from endocuticle of Locusta migratoria. Combined use of plasma desorption mass spectrometry and Edman degradation to study post-translationally modified proteins.</title>
        <authorList>
            <person name="Talbo G."/>
            <person name="Hoejrup P."/>
            <person name="Rahbek-Nielsen H."/>
            <person name="Andersen S.O."/>
            <person name="Roepstorff P."/>
        </authorList>
    </citation>
    <scope>PROTEIN SEQUENCE</scope>
    <scope>PYROGLUTAMATE FORMATION AT GLN-1</scope>
    <scope>AMIDATION AT PRO-116</scope>
    <scope>GLYCOSYLATION AT THR-90; THR-107 AND THR-111</scope>
</reference>
<proteinExistence type="evidence at protein level"/>
<comment type="function">
    <text>Component of the soft endocuticle of migratory locust.</text>
</comment>
<comment type="PTM">
    <text evidence="3">3 variants exists that arise from a sequential glycosylation with N-acetylgalactosamine at three (ABD-4A), two (ABD-4B) or one (ABD-4C) threonine residues.</text>
</comment>